<comment type="function">
    <text evidence="1">Associates with the EF-Tu.GDP complex and induces the exchange of GDP to GTP. It remains bound to the aminoacyl-tRNA.EF-Tu.GTP complex up to the GTP hydrolysis stage on the ribosome.</text>
</comment>
<comment type="subcellular location">
    <subcellularLocation>
        <location evidence="1">Cytoplasm</location>
    </subcellularLocation>
</comment>
<comment type="similarity">
    <text evidence="1">Belongs to the EF-Ts family.</text>
</comment>
<name>EFTS_STAAS</name>
<feature type="chain" id="PRO_0000161199" description="Elongation factor Ts">
    <location>
        <begin position="1"/>
        <end position="293"/>
    </location>
</feature>
<feature type="region of interest" description="Involved in Mg(2+) ion dislocation from EF-Tu" evidence="1">
    <location>
        <begin position="80"/>
        <end position="83"/>
    </location>
</feature>
<organism>
    <name type="scientific">Staphylococcus aureus (strain MSSA476)</name>
    <dbReference type="NCBI Taxonomy" id="282459"/>
    <lineage>
        <taxon>Bacteria</taxon>
        <taxon>Bacillati</taxon>
        <taxon>Bacillota</taxon>
        <taxon>Bacilli</taxon>
        <taxon>Bacillales</taxon>
        <taxon>Staphylococcaceae</taxon>
        <taxon>Staphylococcus</taxon>
    </lineage>
</organism>
<gene>
    <name evidence="1" type="primary">tsf</name>
    <name type="ordered locus">SAS1191</name>
</gene>
<evidence type="ECO:0000255" key="1">
    <source>
        <dbReference type="HAMAP-Rule" id="MF_00050"/>
    </source>
</evidence>
<keyword id="KW-0963">Cytoplasm</keyword>
<keyword id="KW-0251">Elongation factor</keyword>
<keyword id="KW-0648">Protein biosynthesis</keyword>
<dbReference type="EMBL" id="BX571857">
    <property type="protein sequence ID" value="CAG42968.1"/>
    <property type="molecule type" value="Genomic_DNA"/>
</dbReference>
<dbReference type="RefSeq" id="WP_000201387.1">
    <property type="nucleotide sequence ID" value="NC_002953.3"/>
</dbReference>
<dbReference type="SMR" id="Q6G9V6"/>
<dbReference type="KEGG" id="sas:SAS1191"/>
<dbReference type="HOGENOM" id="CLU_047155_0_2_9"/>
<dbReference type="GO" id="GO:0005737">
    <property type="term" value="C:cytoplasm"/>
    <property type="evidence" value="ECO:0007669"/>
    <property type="project" value="UniProtKB-SubCell"/>
</dbReference>
<dbReference type="GO" id="GO:0003746">
    <property type="term" value="F:translation elongation factor activity"/>
    <property type="evidence" value="ECO:0007669"/>
    <property type="project" value="UniProtKB-UniRule"/>
</dbReference>
<dbReference type="CDD" id="cd14275">
    <property type="entry name" value="UBA_EF-Ts"/>
    <property type="match status" value="1"/>
</dbReference>
<dbReference type="FunFam" id="1.10.286.20:FF:000003">
    <property type="entry name" value="Elongation factor Ts"/>
    <property type="match status" value="1"/>
</dbReference>
<dbReference type="FunFam" id="1.10.8.10:FF:000001">
    <property type="entry name" value="Elongation factor Ts"/>
    <property type="match status" value="1"/>
</dbReference>
<dbReference type="FunFam" id="3.30.479.20:FF:000005">
    <property type="entry name" value="Elongation factor Ts"/>
    <property type="match status" value="1"/>
</dbReference>
<dbReference type="Gene3D" id="1.10.286.20">
    <property type="match status" value="1"/>
</dbReference>
<dbReference type="Gene3D" id="1.10.8.10">
    <property type="entry name" value="DNA helicase RuvA subunit, C-terminal domain"/>
    <property type="match status" value="1"/>
</dbReference>
<dbReference type="Gene3D" id="3.30.479.20">
    <property type="entry name" value="Elongation factor Ts, dimerisation domain"/>
    <property type="match status" value="2"/>
</dbReference>
<dbReference type="HAMAP" id="MF_00050">
    <property type="entry name" value="EF_Ts"/>
    <property type="match status" value="1"/>
</dbReference>
<dbReference type="InterPro" id="IPR036402">
    <property type="entry name" value="EF-Ts_dimer_sf"/>
</dbReference>
<dbReference type="InterPro" id="IPR001816">
    <property type="entry name" value="Transl_elong_EFTs/EF1B"/>
</dbReference>
<dbReference type="InterPro" id="IPR014039">
    <property type="entry name" value="Transl_elong_EFTs/EF1B_dimer"/>
</dbReference>
<dbReference type="InterPro" id="IPR018101">
    <property type="entry name" value="Transl_elong_Ts_CS"/>
</dbReference>
<dbReference type="InterPro" id="IPR009060">
    <property type="entry name" value="UBA-like_sf"/>
</dbReference>
<dbReference type="NCBIfam" id="TIGR00116">
    <property type="entry name" value="tsf"/>
    <property type="match status" value="1"/>
</dbReference>
<dbReference type="PANTHER" id="PTHR11741">
    <property type="entry name" value="ELONGATION FACTOR TS"/>
    <property type="match status" value="1"/>
</dbReference>
<dbReference type="PANTHER" id="PTHR11741:SF0">
    <property type="entry name" value="ELONGATION FACTOR TS, MITOCHONDRIAL"/>
    <property type="match status" value="1"/>
</dbReference>
<dbReference type="Pfam" id="PF00889">
    <property type="entry name" value="EF_TS"/>
    <property type="match status" value="1"/>
</dbReference>
<dbReference type="SUPFAM" id="SSF54713">
    <property type="entry name" value="Elongation factor Ts (EF-Ts), dimerisation domain"/>
    <property type="match status" value="2"/>
</dbReference>
<dbReference type="SUPFAM" id="SSF46934">
    <property type="entry name" value="UBA-like"/>
    <property type="match status" value="1"/>
</dbReference>
<dbReference type="PROSITE" id="PS01126">
    <property type="entry name" value="EF_TS_1"/>
    <property type="match status" value="1"/>
</dbReference>
<dbReference type="PROSITE" id="PS01127">
    <property type="entry name" value="EF_TS_2"/>
    <property type="match status" value="1"/>
</dbReference>
<protein>
    <recommendedName>
        <fullName evidence="1">Elongation factor Ts</fullName>
        <shortName evidence="1">EF-Ts</shortName>
    </recommendedName>
</protein>
<sequence length="293" mass="32494">MATISAKLVKELREKTGAGMMDCKKALTETDGDIDKAIDYLREKGIAKAAKKADRIAAEGLVHVETKGNDAVIVEINSETDFVARNEGFQELVKEIANQVLDTKAETVEALMETTLPNGKSVDERIKEAISTIGEKLSVRRFAIRTKTDNDAFGAYLHMGGRIGVLTVVEGSTDEEAARDVAMHIAAINPKYVSSEQVSEEEINHEREVLKQQALNEGKPENIVEKMVEGRLRKYLQEICAVDQDFVKNPDVTVEAFLKTKGGKLVDFVRYEVGEGMEKREENFADEVKGQMK</sequence>
<accession>Q6G9V6</accession>
<reference key="1">
    <citation type="journal article" date="2004" name="Proc. Natl. Acad. Sci. U.S.A.">
        <title>Complete genomes of two clinical Staphylococcus aureus strains: evidence for the rapid evolution of virulence and drug resistance.</title>
        <authorList>
            <person name="Holden M.T.G."/>
            <person name="Feil E.J."/>
            <person name="Lindsay J.A."/>
            <person name="Peacock S.J."/>
            <person name="Day N.P.J."/>
            <person name="Enright M.C."/>
            <person name="Foster T.J."/>
            <person name="Moore C.E."/>
            <person name="Hurst L."/>
            <person name="Atkin R."/>
            <person name="Barron A."/>
            <person name="Bason N."/>
            <person name="Bentley S.D."/>
            <person name="Chillingworth C."/>
            <person name="Chillingworth T."/>
            <person name="Churcher C."/>
            <person name="Clark L."/>
            <person name="Corton C."/>
            <person name="Cronin A."/>
            <person name="Doggett J."/>
            <person name="Dowd L."/>
            <person name="Feltwell T."/>
            <person name="Hance Z."/>
            <person name="Harris B."/>
            <person name="Hauser H."/>
            <person name="Holroyd S."/>
            <person name="Jagels K."/>
            <person name="James K.D."/>
            <person name="Lennard N."/>
            <person name="Line A."/>
            <person name="Mayes R."/>
            <person name="Moule S."/>
            <person name="Mungall K."/>
            <person name="Ormond D."/>
            <person name="Quail M.A."/>
            <person name="Rabbinowitsch E."/>
            <person name="Rutherford K.M."/>
            <person name="Sanders M."/>
            <person name="Sharp S."/>
            <person name="Simmonds M."/>
            <person name="Stevens K."/>
            <person name="Whitehead S."/>
            <person name="Barrell B.G."/>
            <person name="Spratt B.G."/>
            <person name="Parkhill J."/>
        </authorList>
    </citation>
    <scope>NUCLEOTIDE SEQUENCE [LARGE SCALE GENOMIC DNA]</scope>
    <source>
        <strain>MSSA476</strain>
    </source>
</reference>
<proteinExistence type="inferred from homology"/>